<gene>
    <name evidence="1" type="primary">rpmG1</name>
    <name type="ordered locus">llmg_0098</name>
</gene>
<comment type="similarity">
    <text evidence="1">Belongs to the bacterial ribosomal protein bL33 family.</text>
</comment>
<feature type="chain" id="PRO_0000356517" description="Large ribosomal subunit protein bL33A">
    <location>
        <begin position="1"/>
        <end position="49"/>
    </location>
</feature>
<organism>
    <name type="scientific">Lactococcus lactis subsp. cremoris (strain MG1363)</name>
    <dbReference type="NCBI Taxonomy" id="416870"/>
    <lineage>
        <taxon>Bacteria</taxon>
        <taxon>Bacillati</taxon>
        <taxon>Bacillota</taxon>
        <taxon>Bacilli</taxon>
        <taxon>Lactobacillales</taxon>
        <taxon>Streptococcaceae</taxon>
        <taxon>Lactococcus</taxon>
        <taxon>Lactococcus cremoris subsp. cremoris</taxon>
    </lineage>
</organism>
<protein>
    <recommendedName>
        <fullName evidence="1">Large ribosomal subunit protein bL33A</fullName>
    </recommendedName>
    <alternativeName>
        <fullName evidence="1">50S ribosomal protein L33 1</fullName>
    </alternativeName>
</protein>
<accession>A2RHG9</accession>
<evidence type="ECO:0000255" key="1">
    <source>
        <dbReference type="HAMAP-Rule" id="MF_00294"/>
    </source>
</evidence>
<reference key="1">
    <citation type="journal article" date="2007" name="J. Bacteriol.">
        <title>The complete genome sequence of the lactic acid bacterial paradigm Lactococcus lactis subsp. cremoris MG1363.</title>
        <authorList>
            <person name="Wegmann U."/>
            <person name="O'Connell-Motherway M."/>
            <person name="Zomer A."/>
            <person name="Buist G."/>
            <person name="Shearman C."/>
            <person name="Canchaya C."/>
            <person name="Ventura M."/>
            <person name="Goesmann A."/>
            <person name="Gasson M.J."/>
            <person name="Kuipers O.P."/>
            <person name="van Sinderen D."/>
            <person name="Kok J."/>
        </authorList>
    </citation>
    <scope>NUCLEOTIDE SEQUENCE [LARGE SCALE GENOMIC DNA]</scope>
    <source>
        <strain>MG1363</strain>
    </source>
</reference>
<name>RL331_LACLM</name>
<sequence>MRVNITLEHKESGERLYLTQKNKRNTPDKLELKKYSKKLRKHVIFKEVK</sequence>
<keyword id="KW-0687">Ribonucleoprotein</keyword>
<keyword id="KW-0689">Ribosomal protein</keyword>
<dbReference type="EMBL" id="AM406671">
    <property type="protein sequence ID" value="CAL96705.1"/>
    <property type="molecule type" value="Genomic_DNA"/>
</dbReference>
<dbReference type="SMR" id="A2RHG9"/>
<dbReference type="STRING" id="416870.llmg_0098"/>
<dbReference type="KEGG" id="llm:llmg_0098"/>
<dbReference type="eggNOG" id="COG0267">
    <property type="taxonomic scope" value="Bacteria"/>
</dbReference>
<dbReference type="HOGENOM" id="CLU_190949_3_2_9"/>
<dbReference type="OrthoDB" id="197660at2"/>
<dbReference type="PhylomeDB" id="A2RHG9"/>
<dbReference type="Proteomes" id="UP000000364">
    <property type="component" value="Chromosome"/>
</dbReference>
<dbReference type="GO" id="GO:0005737">
    <property type="term" value="C:cytoplasm"/>
    <property type="evidence" value="ECO:0007669"/>
    <property type="project" value="UniProtKB-ARBA"/>
</dbReference>
<dbReference type="GO" id="GO:1990904">
    <property type="term" value="C:ribonucleoprotein complex"/>
    <property type="evidence" value="ECO:0007669"/>
    <property type="project" value="UniProtKB-KW"/>
</dbReference>
<dbReference type="GO" id="GO:0005840">
    <property type="term" value="C:ribosome"/>
    <property type="evidence" value="ECO:0007669"/>
    <property type="project" value="UniProtKB-KW"/>
</dbReference>
<dbReference type="GO" id="GO:0003735">
    <property type="term" value="F:structural constituent of ribosome"/>
    <property type="evidence" value="ECO:0007669"/>
    <property type="project" value="InterPro"/>
</dbReference>
<dbReference type="GO" id="GO:0006412">
    <property type="term" value="P:translation"/>
    <property type="evidence" value="ECO:0007669"/>
    <property type="project" value="UniProtKB-UniRule"/>
</dbReference>
<dbReference type="Gene3D" id="2.20.28.120">
    <property type="entry name" value="Ribosomal protein L33"/>
    <property type="match status" value="1"/>
</dbReference>
<dbReference type="HAMAP" id="MF_00294">
    <property type="entry name" value="Ribosomal_bL33"/>
    <property type="match status" value="1"/>
</dbReference>
<dbReference type="InterPro" id="IPR001705">
    <property type="entry name" value="Ribosomal_bL33"/>
</dbReference>
<dbReference type="InterPro" id="IPR018264">
    <property type="entry name" value="Ribosomal_bL33_CS"/>
</dbReference>
<dbReference type="InterPro" id="IPR038584">
    <property type="entry name" value="Ribosomal_bL33_sf"/>
</dbReference>
<dbReference type="InterPro" id="IPR011332">
    <property type="entry name" value="Ribosomal_zn-bd"/>
</dbReference>
<dbReference type="NCBIfam" id="NF001764">
    <property type="entry name" value="PRK00504.1"/>
    <property type="match status" value="1"/>
</dbReference>
<dbReference type="NCBIfam" id="NF001860">
    <property type="entry name" value="PRK00595.1"/>
    <property type="match status" value="1"/>
</dbReference>
<dbReference type="NCBIfam" id="TIGR01023">
    <property type="entry name" value="rpmG_bact"/>
    <property type="match status" value="1"/>
</dbReference>
<dbReference type="PANTHER" id="PTHR43168">
    <property type="entry name" value="50S RIBOSOMAL PROTEIN L33, CHLOROPLASTIC"/>
    <property type="match status" value="1"/>
</dbReference>
<dbReference type="PANTHER" id="PTHR43168:SF2">
    <property type="entry name" value="LARGE RIBOSOMAL SUBUNIT PROTEIN BL33C"/>
    <property type="match status" value="1"/>
</dbReference>
<dbReference type="Pfam" id="PF00471">
    <property type="entry name" value="Ribosomal_L33"/>
    <property type="match status" value="1"/>
</dbReference>
<dbReference type="SUPFAM" id="SSF57829">
    <property type="entry name" value="Zn-binding ribosomal proteins"/>
    <property type="match status" value="1"/>
</dbReference>
<dbReference type="PROSITE" id="PS00582">
    <property type="entry name" value="RIBOSOMAL_L33"/>
    <property type="match status" value="1"/>
</dbReference>
<proteinExistence type="inferred from homology"/>